<dbReference type="EC" id="2.1.1.77" evidence="1"/>
<dbReference type="EMBL" id="BX950851">
    <property type="protein sequence ID" value="CAG76430.1"/>
    <property type="molecule type" value="Genomic_DNA"/>
</dbReference>
<dbReference type="RefSeq" id="WP_011095036.1">
    <property type="nucleotide sequence ID" value="NC_004547.2"/>
</dbReference>
<dbReference type="SMR" id="Q6D1B6"/>
<dbReference type="STRING" id="218491.ECA3532"/>
<dbReference type="GeneID" id="57210206"/>
<dbReference type="KEGG" id="eca:ECA3532"/>
<dbReference type="PATRIC" id="fig|218491.5.peg.3578"/>
<dbReference type="eggNOG" id="COG2518">
    <property type="taxonomic scope" value="Bacteria"/>
</dbReference>
<dbReference type="HOGENOM" id="CLU_055432_2_0_6"/>
<dbReference type="OrthoDB" id="9810066at2"/>
<dbReference type="Proteomes" id="UP000007966">
    <property type="component" value="Chromosome"/>
</dbReference>
<dbReference type="GO" id="GO:0005737">
    <property type="term" value="C:cytoplasm"/>
    <property type="evidence" value="ECO:0007669"/>
    <property type="project" value="UniProtKB-SubCell"/>
</dbReference>
<dbReference type="GO" id="GO:0004719">
    <property type="term" value="F:protein-L-isoaspartate (D-aspartate) O-methyltransferase activity"/>
    <property type="evidence" value="ECO:0007669"/>
    <property type="project" value="UniProtKB-UniRule"/>
</dbReference>
<dbReference type="GO" id="GO:0032259">
    <property type="term" value="P:methylation"/>
    <property type="evidence" value="ECO:0007669"/>
    <property type="project" value="UniProtKB-KW"/>
</dbReference>
<dbReference type="GO" id="GO:0036211">
    <property type="term" value="P:protein modification process"/>
    <property type="evidence" value="ECO:0007669"/>
    <property type="project" value="UniProtKB-UniRule"/>
</dbReference>
<dbReference type="GO" id="GO:0030091">
    <property type="term" value="P:protein repair"/>
    <property type="evidence" value="ECO:0007669"/>
    <property type="project" value="UniProtKB-UniRule"/>
</dbReference>
<dbReference type="CDD" id="cd02440">
    <property type="entry name" value="AdoMet_MTases"/>
    <property type="match status" value="1"/>
</dbReference>
<dbReference type="FunFam" id="3.40.50.150:FF:000010">
    <property type="entry name" value="Protein-L-isoaspartate O-methyltransferase"/>
    <property type="match status" value="1"/>
</dbReference>
<dbReference type="Gene3D" id="3.40.50.150">
    <property type="entry name" value="Vaccinia Virus protein VP39"/>
    <property type="match status" value="1"/>
</dbReference>
<dbReference type="HAMAP" id="MF_00090">
    <property type="entry name" value="PIMT"/>
    <property type="match status" value="1"/>
</dbReference>
<dbReference type="InterPro" id="IPR000682">
    <property type="entry name" value="PCMT"/>
</dbReference>
<dbReference type="InterPro" id="IPR029063">
    <property type="entry name" value="SAM-dependent_MTases_sf"/>
</dbReference>
<dbReference type="NCBIfam" id="TIGR00080">
    <property type="entry name" value="pimt"/>
    <property type="match status" value="1"/>
</dbReference>
<dbReference type="NCBIfam" id="NF001453">
    <property type="entry name" value="PRK00312.1"/>
    <property type="match status" value="1"/>
</dbReference>
<dbReference type="PANTHER" id="PTHR11579">
    <property type="entry name" value="PROTEIN-L-ISOASPARTATE O-METHYLTRANSFERASE"/>
    <property type="match status" value="1"/>
</dbReference>
<dbReference type="PANTHER" id="PTHR11579:SF0">
    <property type="entry name" value="PROTEIN-L-ISOASPARTATE(D-ASPARTATE) O-METHYLTRANSFERASE"/>
    <property type="match status" value="1"/>
</dbReference>
<dbReference type="Pfam" id="PF01135">
    <property type="entry name" value="PCMT"/>
    <property type="match status" value="1"/>
</dbReference>
<dbReference type="SUPFAM" id="SSF53335">
    <property type="entry name" value="S-adenosyl-L-methionine-dependent methyltransferases"/>
    <property type="match status" value="1"/>
</dbReference>
<dbReference type="PROSITE" id="PS01279">
    <property type="entry name" value="PCMT"/>
    <property type="match status" value="1"/>
</dbReference>
<feature type="chain" id="PRO_0000111889" description="Protein-L-isoaspartate O-methyltransferase">
    <location>
        <begin position="1"/>
        <end position="208"/>
    </location>
</feature>
<feature type="active site" evidence="1">
    <location>
        <position position="59"/>
    </location>
</feature>
<proteinExistence type="inferred from homology"/>
<gene>
    <name evidence="1" type="primary">pcm</name>
    <name type="ordered locus">ECA3532</name>
</gene>
<sequence length="208" mass="23130">MVNKRIETLLAQLRQQGIEDERLLTAIEAVPRERFVDEAFEHKAYENTALPIGSGQTISQPYMVAKMTELLNLTPESRVLEIGTGSGYQTAILAHLVQHVCSVERIKGLQWQAKRRLKQLDLHNVSTRHGDGWQGWASRGPFDAIIVTAAPPEIPQALLEQLDEGGVMVLPVGEQSQILQVVQRHAGEFIIKTVEAVRFVPLVKGELA</sequence>
<keyword id="KW-0963">Cytoplasm</keyword>
<keyword id="KW-0489">Methyltransferase</keyword>
<keyword id="KW-1185">Reference proteome</keyword>
<keyword id="KW-0949">S-adenosyl-L-methionine</keyword>
<keyword id="KW-0808">Transferase</keyword>
<evidence type="ECO:0000255" key="1">
    <source>
        <dbReference type="HAMAP-Rule" id="MF_00090"/>
    </source>
</evidence>
<protein>
    <recommendedName>
        <fullName evidence="1">Protein-L-isoaspartate O-methyltransferase</fullName>
        <ecNumber evidence="1">2.1.1.77</ecNumber>
    </recommendedName>
    <alternativeName>
        <fullName evidence="1">L-isoaspartyl protein carboxyl methyltransferase</fullName>
    </alternativeName>
    <alternativeName>
        <fullName evidence="1">Protein L-isoaspartyl methyltransferase</fullName>
    </alternativeName>
    <alternativeName>
        <fullName evidence="1">Protein-beta-aspartate methyltransferase</fullName>
        <shortName evidence="1">PIMT</shortName>
    </alternativeName>
</protein>
<accession>Q6D1B6</accession>
<organism>
    <name type="scientific">Pectobacterium atrosepticum (strain SCRI 1043 / ATCC BAA-672)</name>
    <name type="common">Erwinia carotovora subsp. atroseptica</name>
    <dbReference type="NCBI Taxonomy" id="218491"/>
    <lineage>
        <taxon>Bacteria</taxon>
        <taxon>Pseudomonadati</taxon>
        <taxon>Pseudomonadota</taxon>
        <taxon>Gammaproteobacteria</taxon>
        <taxon>Enterobacterales</taxon>
        <taxon>Pectobacteriaceae</taxon>
        <taxon>Pectobacterium</taxon>
    </lineage>
</organism>
<reference key="1">
    <citation type="journal article" date="2004" name="Proc. Natl. Acad. Sci. U.S.A.">
        <title>Genome sequence of the enterobacterial phytopathogen Erwinia carotovora subsp. atroseptica and characterization of virulence factors.</title>
        <authorList>
            <person name="Bell K.S."/>
            <person name="Sebaihia M."/>
            <person name="Pritchard L."/>
            <person name="Holden M.T.G."/>
            <person name="Hyman L.J."/>
            <person name="Holeva M.C."/>
            <person name="Thomson N.R."/>
            <person name="Bentley S.D."/>
            <person name="Churcher L.J.C."/>
            <person name="Mungall K."/>
            <person name="Atkin R."/>
            <person name="Bason N."/>
            <person name="Brooks K."/>
            <person name="Chillingworth T."/>
            <person name="Clark K."/>
            <person name="Doggett J."/>
            <person name="Fraser A."/>
            <person name="Hance Z."/>
            <person name="Hauser H."/>
            <person name="Jagels K."/>
            <person name="Moule S."/>
            <person name="Norbertczak H."/>
            <person name="Ormond D."/>
            <person name="Price C."/>
            <person name="Quail M.A."/>
            <person name="Sanders M."/>
            <person name="Walker D."/>
            <person name="Whitehead S."/>
            <person name="Salmond G.P.C."/>
            <person name="Birch P.R.J."/>
            <person name="Parkhill J."/>
            <person name="Toth I.K."/>
        </authorList>
    </citation>
    <scope>NUCLEOTIDE SEQUENCE [LARGE SCALE GENOMIC DNA]</scope>
    <source>
        <strain>SCRI 1043 / ATCC BAA-672</strain>
    </source>
</reference>
<comment type="function">
    <text evidence="1">Catalyzes the methyl esterification of L-isoaspartyl residues in peptides and proteins that result from spontaneous decomposition of normal L-aspartyl and L-asparaginyl residues. It plays a role in the repair and/or degradation of damaged proteins.</text>
</comment>
<comment type="catalytic activity">
    <reaction evidence="1">
        <text>[protein]-L-isoaspartate + S-adenosyl-L-methionine = [protein]-L-isoaspartate alpha-methyl ester + S-adenosyl-L-homocysteine</text>
        <dbReference type="Rhea" id="RHEA:12705"/>
        <dbReference type="Rhea" id="RHEA-COMP:12143"/>
        <dbReference type="Rhea" id="RHEA-COMP:12144"/>
        <dbReference type="ChEBI" id="CHEBI:57856"/>
        <dbReference type="ChEBI" id="CHEBI:59789"/>
        <dbReference type="ChEBI" id="CHEBI:90596"/>
        <dbReference type="ChEBI" id="CHEBI:90598"/>
        <dbReference type="EC" id="2.1.1.77"/>
    </reaction>
</comment>
<comment type="subcellular location">
    <subcellularLocation>
        <location evidence="1">Cytoplasm</location>
    </subcellularLocation>
</comment>
<comment type="similarity">
    <text evidence="1">Belongs to the methyltransferase superfamily. L-isoaspartyl/D-aspartyl protein methyltransferase family.</text>
</comment>
<name>PIMT_PECAS</name>